<feature type="chain" id="PRO_0000304102" description="Uncharacterized protein C36.11">
    <location>
        <begin position="1"/>
        <end position="343"/>
    </location>
</feature>
<feature type="transmembrane region" description="Helical" evidence="1">
    <location>
        <begin position="96"/>
        <end position="116"/>
    </location>
</feature>
<feature type="region of interest" description="Disordered" evidence="2">
    <location>
        <begin position="66"/>
        <end position="89"/>
    </location>
</feature>
<feature type="region of interest" description="Disordered" evidence="2">
    <location>
        <begin position="161"/>
        <end position="191"/>
    </location>
</feature>
<feature type="region of interest" description="Disordered" evidence="2">
    <location>
        <begin position="252"/>
        <end position="343"/>
    </location>
</feature>
<feature type="compositionally biased region" description="Low complexity" evidence="2">
    <location>
        <begin position="71"/>
        <end position="84"/>
    </location>
</feature>
<feature type="compositionally biased region" description="Polar residues" evidence="2">
    <location>
        <begin position="165"/>
        <end position="188"/>
    </location>
</feature>
<feature type="compositionally biased region" description="Basic and acidic residues" evidence="2">
    <location>
        <begin position="280"/>
        <end position="289"/>
    </location>
</feature>
<feature type="compositionally biased region" description="Low complexity" evidence="2">
    <location>
        <begin position="290"/>
        <end position="299"/>
    </location>
</feature>
<feature type="compositionally biased region" description="Basic and acidic residues" evidence="2">
    <location>
        <begin position="301"/>
        <end position="311"/>
    </location>
</feature>
<feature type="compositionally biased region" description="Basic and acidic residues" evidence="2">
    <location>
        <begin position="322"/>
        <end position="333"/>
    </location>
</feature>
<feature type="compositionally biased region" description="Basic residues" evidence="2">
    <location>
        <begin position="334"/>
        <end position="343"/>
    </location>
</feature>
<accession>O59708</accession>
<protein>
    <recommendedName>
        <fullName>Uncharacterized protein C36.11</fullName>
    </recommendedName>
</protein>
<organism>
    <name type="scientific">Schizosaccharomyces pombe (strain 972 / ATCC 24843)</name>
    <name type="common">Fission yeast</name>
    <dbReference type="NCBI Taxonomy" id="284812"/>
    <lineage>
        <taxon>Eukaryota</taxon>
        <taxon>Fungi</taxon>
        <taxon>Dikarya</taxon>
        <taxon>Ascomycota</taxon>
        <taxon>Taphrinomycotina</taxon>
        <taxon>Schizosaccharomycetes</taxon>
        <taxon>Schizosaccharomycetales</taxon>
        <taxon>Schizosaccharomycetaceae</taxon>
        <taxon>Schizosaccharomyces</taxon>
    </lineage>
</organism>
<gene>
    <name type="ORF">SPBC36.11</name>
</gene>
<name>YN4B_SCHPO</name>
<evidence type="ECO:0000255" key="1"/>
<evidence type="ECO:0000256" key="2">
    <source>
        <dbReference type="SAM" id="MobiDB-lite"/>
    </source>
</evidence>
<evidence type="ECO:0000269" key="3">
    <source>
    </source>
</evidence>
<sequence length="343" mass="37742">MSISNDSLASTVPGDELPSSYPVFSSDFSYIKPSHVLDVVTVTSTAGPEATDDPSYSGFYSTVISTQNPEPTSASTPPSASASSLPNGAQKHNHTGVIAGPIVGVLGGLIVLVIIFYCLRHFKRKKFLAEQQEFERQFEEEKSRLAAVRKNTEQEKMGYRGGYQMHSTPWASSPRNSTIPQRSQSFYNDTRRSSDLGANAADFVTPPGNVANSDNIRILKRNSIATIGNYRSPSALEKRRSISYGAVQSVQGRPLAPIPGRRPLSISSDLYNDSNSGSHSNDDSDETKLKQSSTESSSELLDEKDKFDKNSLNDPFVTIRKSSYEHEISEEHKKHSKKRSEHF</sequence>
<keyword id="KW-0333">Golgi apparatus</keyword>
<keyword id="KW-0472">Membrane</keyword>
<keyword id="KW-1185">Reference proteome</keyword>
<keyword id="KW-0812">Transmembrane</keyword>
<keyword id="KW-1133">Transmembrane helix</keyword>
<proteinExistence type="predicted"/>
<reference key="1">
    <citation type="journal article" date="2002" name="Nature">
        <title>The genome sequence of Schizosaccharomyces pombe.</title>
        <authorList>
            <person name="Wood V."/>
            <person name="Gwilliam R."/>
            <person name="Rajandream M.A."/>
            <person name="Lyne M.H."/>
            <person name="Lyne R."/>
            <person name="Stewart A."/>
            <person name="Sgouros J.G."/>
            <person name="Peat N."/>
            <person name="Hayles J."/>
            <person name="Baker S.G."/>
            <person name="Basham D."/>
            <person name="Bowman S."/>
            <person name="Brooks K."/>
            <person name="Brown D."/>
            <person name="Brown S."/>
            <person name="Chillingworth T."/>
            <person name="Churcher C.M."/>
            <person name="Collins M."/>
            <person name="Connor R."/>
            <person name="Cronin A."/>
            <person name="Davis P."/>
            <person name="Feltwell T."/>
            <person name="Fraser A."/>
            <person name="Gentles S."/>
            <person name="Goble A."/>
            <person name="Hamlin N."/>
            <person name="Harris D.E."/>
            <person name="Hidalgo J."/>
            <person name="Hodgson G."/>
            <person name="Holroyd S."/>
            <person name="Hornsby T."/>
            <person name="Howarth S."/>
            <person name="Huckle E.J."/>
            <person name="Hunt S."/>
            <person name="Jagels K."/>
            <person name="James K.D."/>
            <person name="Jones L."/>
            <person name="Jones M."/>
            <person name="Leather S."/>
            <person name="McDonald S."/>
            <person name="McLean J."/>
            <person name="Mooney P."/>
            <person name="Moule S."/>
            <person name="Mungall K.L."/>
            <person name="Murphy L.D."/>
            <person name="Niblett D."/>
            <person name="Odell C."/>
            <person name="Oliver K."/>
            <person name="O'Neil S."/>
            <person name="Pearson D."/>
            <person name="Quail M.A."/>
            <person name="Rabbinowitsch E."/>
            <person name="Rutherford K.M."/>
            <person name="Rutter S."/>
            <person name="Saunders D."/>
            <person name="Seeger K."/>
            <person name="Sharp S."/>
            <person name="Skelton J."/>
            <person name="Simmonds M.N."/>
            <person name="Squares R."/>
            <person name="Squares S."/>
            <person name="Stevens K."/>
            <person name="Taylor K."/>
            <person name="Taylor R.G."/>
            <person name="Tivey A."/>
            <person name="Walsh S.V."/>
            <person name="Warren T."/>
            <person name="Whitehead S."/>
            <person name="Woodward J.R."/>
            <person name="Volckaert G."/>
            <person name="Aert R."/>
            <person name="Robben J."/>
            <person name="Grymonprez B."/>
            <person name="Weltjens I."/>
            <person name="Vanstreels E."/>
            <person name="Rieger M."/>
            <person name="Schaefer M."/>
            <person name="Mueller-Auer S."/>
            <person name="Gabel C."/>
            <person name="Fuchs M."/>
            <person name="Duesterhoeft A."/>
            <person name="Fritzc C."/>
            <person name="Holzer E."/>
            <person name="Moestl D."/>
            <person name="Hilbert H."/>
            <person name="Borzym K."/>
            <person name="Langer I."/>
            <person name="Beck A."/>
            <person name="Lehrach H."/>
            <person name="Reinhardt R."/>
            <person name="Pohl T.M."/>
            <person name="Eger P."/>
            <person name="Zimmermann W."/>
            <person name="Wedler H."/>
            <person name="Wambutt R."/>
            <person name="Purnelle B."/>
            <person name="Goffeau A."/>
            <person name="Cadieu E."/>
            <person name="Dreano S."/>
            <person name="Gloux S."/>
            <person name="Lelaure V."/>
            <person name="Mottier S."/>
            <person name="Galibert F."/>
            <person name="Aves S.J."/>
            <person name="Xiang Z."/>
            <person name="Hunt C."/>
            <person name="Moore K."/>
            <person name="Hurst S.M."/>
            <person name="Lucas M."/>
            <person name="Rochet M."/>
            <person name="Gaillardin C."/>
            <person name="Tallada V.A."/>
            <person name="Garzon A."/>
            <person name="Thode G."/>
            <person name="Daga R.R."/>
            <person name="Cruzado L."/>
            <person name="Jimenez J."/>
            <person name="Sanchez M."/>
            <person name="del Rey F."/>
            <person name="Benito J."/>
            <person name="Dominguez A."/>
            <person name="Revuelta J.L."/>
            <person name="Moreno S."/>
            <person name="Armstrong J."/>
            <person name="Forsburg S.L."/>
            <person name="Cerutti L."/>
            <person name="Lowe T."/>
            <person name="McCombie W.R."/>
            <person name="Paulsen I."/>
            <person name="Potashkin J."/>
            <person name="Shpakovski G.V."/>
            <person name="Ussery D."/>
            <person name="Barrell B.G."/>
            <person name="Nurse P."/>
        </authorList>
    </citation>
    <scope>NUCLEOTIDE SEQUENCE [LARGE SCALE GENOMIC DNA]</scope>
    <source>
        <strain>972 / ATCC 24843</strain>
    </source>
</reference>
<reference key="2">
    <citation type="journal article" date="2006" name="Nat. Biotechnol.">
        <title>ORFeome cloning and global analysis of protein localization in the fission yeast Schizosaccharomyces pombe.</title>
        <authorList>
            <person name="Matsuyama A."/>
            <person name="Arai R."/>
            <person name="Yashiroda Y."/>
            <person name="Shirai A."/>
            <person name="Kamata A."/>
            <person name="Sekido S."/>
            <person name="Kobayashi Y."/>
            <person name="Hashimoto A."/>
            <person name="Hamamoto M."/>
            <person name="Hiraoka Y."/>
            <person name="Horinouchi S."/>
            <person name="Yoshida M."/>
        </authorList>
    </citation>
    <scope>SUBCELLULAR LOCATION [LARGE SCALE ANALYSIS]</scope>
</reference>
<dbReference type="EMBL" id="CU329671">
    <property type="protein sequence ID" value="CAA19059.1"/>
    <property type="molecule type" value="Genomic_DNA"/>
</dbReference>
<dbReference type="PIR" id="T40306">
    <property type="entry name" value="T40306"/>
</dbReference>
<dbReference type="RefSeq" id="NP_595339.1">
    <property type="nucleotide sequence ID" value="NM_001021247.2"/>
</dbReference>
<dbReference type="BioGRID" id="276900">
    <property type="interactions" value="9"/>
</dbReference>
<dbReference type="STRING" id="284812.O59708"/>
<dbReference type="iPTMnet" id="O59708"/>
<dbReference type="PaxDb" id="4896-SPBC36.11.1"/>
<dbReference type="EnsemblFungi" id="SPBC36.11.1">
    <property type="protein sequence ID" value="SPBC36.11.1:pep"/>
    <property type="gene ID" value="SPBC36.11"/>
</dbReference>
<dbReference type="PomBase" id="SPBC36.11"/>
<dbReference type="VEuPathDB" id="FungiDB:SPBC36.11"/>
<dbReference type="HOGENOM" id="CLU_809322_0_0_1"/>
<dbReference type="InParanoid" id="O59708"/>
<dbReference type="OMA" id="EQEKMGY"/>
<dbReference type="PRO" id="PR:O59708"/>
<dbReference type="Proteomes" id="UP000002485">
    <property type="component" value="Chromosome II"/>
</dbReference>
<dbReference type="GO" id="GO:0032153">
    <property type="term" value="C:cell division site"/>
    <property type="evidence" value="ECO:0007005"/>
    <property type="project" value="PomBase"/>
</dbReference>
<dbReference type="GO" id="GO:0051286">
    <property type="term" value="C:cell tip"/>
    <property type="evidence" value="ECO:0007005"/>
    <property type="project" value="PomBase"/>
</dbReference>
<dbReference type="GO" id="GO:0005794">
    <property type="term" value="C:Golgi apparatus"/>
    <property type="evidence" value="ECO:0007005"/>
    <property type="project" value="PomBase"/>
</dbReference>
<dbReference type="GO" id="GO:0000139">
    <property type="term" value="C:Golgi membrane"/>
    <property type="evidence" value="ECO:0007669"/>
    <property type="project" value="UniProtKB-SubCell"/>
</dbReference>
<comment type="subcellular location">
    <subcellularLocation>
        <location evidence="3">Golgi apparatus membrane</location>
        <topology evidence="3">Single-pass membrane protein</topology>
    </subcellularLocation>
    <text>Localizes to the cell tip and the barrier septum.</text>
</comment>